<accession>Q73FE5</accession>
<organism>
    <name type="scientific">Bacillus cereus (strain ATCC 10987 / NRS 248)</name>
    <dbReference type="NCBI Taxonomy" id="222523"/>
    <lineage>
        <taxon>Bacteria</taxon>
        <taxon>Bacillati</taxon>
        <taxon>Bacillota</taxon>
        <taxon>Bacilli</taxon>
        <taxon>Bacillales</taxon>
        <taxon>Bacillaceae</taxon>
        <taxon>Bacillus</taxon>
        <taxon>Bacillus cereus group</taxon>
    </lineage>
</organism>
<gene>
    <name evidence="1" type="primary">tilS</name>
    <name type="ordered locus">BCE_0061</name>
</gene>
<feature type="chain" id="PRO_0000181642" description="tRNA(Ile)-lysidine synthase">
    <location>
        <begin position="1"/>
        <end position="476"/>
    </location>
</feature>
<feature type="binding site" evidence="1">
    <location>
        <begin position="30"/>
        <end position="35"/>
    </location>
    <ligand>
        <name>ATP</name>
        <dbReference type="ChEBI" id="CHEBI:30616"/>
    </ligand>
</feature>
<keyword id="KW-0067">ATP-binding</keyword>
<keyword id="KW-0963">Cytoplasm</keyword>
<keyword id="KW-0436">Ligase</keyword>
<keyword id="KW-0547">Nucleotide-binding</keyword>
<keyword id="KW-0819">tRNA processing</keyword>
<sequence>MKDTFVEKVDDFVKQHDVLKERSTIVVGVSGGPDSVALLYYLLEKRAAKQFEIVVAHVDHMFRGDESHEDLQFVQDLCKELGVICETIRINVSQYQQQYGMNAQVAARECRYAFLERIMKKYDARYVALGHHGDDQVETILMRLVRGSTPKGYAGIAVKRPFHNGYLIRPLLGVTKEEIVDYCHKLKIIPRIDPSNKKEVYTRNRLRKYVLPHLKEENPQVHEKFQKFSMQMQEDEAYLQELAFEKMNKVITKKSDKQISLSIPAFESMSMPLQRRGIQLILNYLYEYKIPSSLSSIHIDKVIEFFKRTQPSGSLDFPGDLKIVRAYEECSFGFKQEIVSPFLQDLSVPGTITLSNGDKLVTEVSEDIPSNMNETVFVAKYNDISYPLRIRSRENGDRMSIQGMNGTKKIKAIFIEAKVPREKREEWPVVCDARGNVIWLPLLKRSAFAISKETAKKDKYMIIHYKSKESSGRIMK</sequence>
<comment type="function">
    <text evidence="1">Ligates lysine onto the cytidine present at position 34 of the AUA codon-specific tRNA(Ile) that contains the anticodon CAU, in an ATP-dependent manner. Cytidine is converted to lysidine, thus changing the amino acid specificity of the tRNA from methionine to isoleucine.</text>
</comment>
<comment type="catalytic activity">
    <reaction evidence="1">
        <text>cytidine(34) in tRNA(Ile2) + L-lysine + ATP = lysidine(34) in tRNA(Ile2) + AMP + diphosphate + H(+)</text>
        <dbReference type="Rhea" id="RHEA:43744"/>
        <dbReference type="Rhea" id="RHEA-COMP:10625"/>
        <dbReference type="Rhea" id="RHEA-COMP:10670"/>
        <dbReference type="ChEBI" id="CHEBI:15378"/>
        <dbReference type="ChEBI" id="CHEBI:30616"/>
        <dbReference type="ChEBI" id="CHEBI:32551"/>
        <dbReference type="ChEBI" id="CHEBI:33019"/>
        <dbReference type="ChEBI" id="CHEBI:82748"/>
        <dbReference type="ChEBI" id="CHEBI:83665"/>
        <dbReference type="ChEBI" id="CHEBI:456215"/>
        <dbReference type="EC" id="6.3.4.19"/>
    </reaction>
</comment>
<comment type="subcellular location">
    <subcellularLocation>
        <location evidence="1">Cytoplasm</location>
    </subcellularLocation>
</comment>
<comment type="domain">
    <text>The N-terminal region contains the highly conserved SGGXDS motif, predicted to be a P-loop motif involved in ATP binding.</text>
</comment>
<comment type="similarity">
    <text evidence="1">Belongs to the tRNA(Ile)-lysidine synthase family.</text>
</comment>
<name>TILS_BACC1</name>
<proteinExistence type="inferred from homology"/>
<evidence type="ECO:0000255" key="1">
    <source>
        <dbReference type="HAMAP-Rule" id="MF_01161"/>
    </source>
</evidence>
<dbReference type="EC" id="6.3.4.19" evidence="1"/>
<dbReference type="EMBL" id="AE017194">
    <property type="protein sequence ID" value="AAS38997.1"/>
    <property type="molecule type" value="Genomic_DNA"/>
</dbReference>
<dbReference type="SMR" id="Q73FE5"/>
<dbReference type="KEGG" id="bca:BCE_0061"/>
<dbReference type="HOGENOM" id="CLU_018869_0_1_9"/>
<dbReference type="Proteomes" id="UP000002527">
    <property type="component" value="Chromosome"/>
</dbReference>
<dbReference type="GO" id="GO:0005737">
    <property type="term" value="C:cytoplasm"/>
    <property type="evidence" value="ECO:0007669"/>
    <property type="project" value="UniProtKB-SubCell"/>
</dbReference>
<dbReference type="GO" id="GO:0005524">
    <property type="term" value="F:ATP binding"/>
    <property type="evidence" value="ECO:0007669"/>
    <property type="project" value="UniProtKB-UniRule"/>
</dbReference>
<dbReference type="GO" id="GO:0032267">
    <property type="term" value="F:tRNA(Ile)-lysidine synthase activity"/>
    <property type="evidence" value="ECO:0007669"/>
    <property type="project" value="UniProtKB-EC"/>
</dbReference>
<dbReference type="GO" id="GO:0006400">
    <property type="term" value="P:tRNA modification"/>
    <property type="evidence" value="ECO:0007669"/>
    <property type="project" value="UniProtKB-UniRule"/>
</dbReference>
<dbReference type="CDD" id="cd01992">
    <property type="entry name" value="TilS_N"/>
    <property type="match status" value="1"/>
</dbReference>
<dbReference type="Gene3D" id="3.30.465.60">
    <property type="match status" value="1"/>
</dbReference>
<dbReference type="Gene3D" id="3.40.50.620">
    <property type="entry name" value="HUPs"/>
    <property type="match status" value="1"/>
</dbReference>
<dbReference type="HAMAP" id="MF_01161">
    <property type="entry name" value="tRNA_Ile_lys_synt"/>
    <property type="match status" value="1"/>
</dbReference>
<dbReference type="InterPro" id="IPR012796">
    <property type="entry name" value="Lysidine-tRNA-synth_C"/>
</dbReference>
<dbReference type="InterPro" id="IPR014729">
    <property type="entry name" value="Rossmann-like_a/b/a_fold"/>
</dbReference>
<dbReference type="InterPro" id="IPR011063">
    <property type="entry name" value="TilS/TtcA_N"/>
</dbReference>
<dbReference type="InterPro" id="IPR012094">
    <property type="entry name" value="tRNA_Ile_lys_synt"/>
</dbReference>
<dbReference type="InterPro" id="IPR012795">
    <property type="entry name" value="tRNA_Ile_lys_synt_N"/>
</dbReference>
<dbReference type="InterPro" id="IPR015262">
    <property type="entry name" value="tRNA_Ile_lys_synt_subst-bd"/>
</dbReference>
<dbReference type="NCBIfam" id="TIGR02433">
    <property type="entry name" value="lysidine_TilS_C"/>
    <property type="match status" value="1"/>
</dbReference>
<dbReference type="NCBIfam" id="TIGR02432">
    <property type="entry name" value="lysidine_TilS_N"/>
    <property type="match status" value="1"/>
</dbReference>
<dbReference type="PANTHER" id="PTHR43033">
    <property type="entry name" value="TRNA(ILE)-LYSIDINE SYNTHASE-RELATED"/>
    <property type="match status" value="1"/>
</dbReference>
<dbReference type="PANTHER" id="PTHR43033:SF1">
    <property type="entry name" value="TRNA(ILE)-LYSIDINE SYNTHASE-RELATED"/>
    <property type="match status" value="1"/>
</dbReference>
<dbReference type="Pfam" id="PF01171">
    <property type="entry name" value="ATP_bind_3"/>
    <property type="match status" value="1"/>
</dbReference>
<dbReference type="Pfam" id="PF09179">
    <property type="entry name" value="TilS"/>
    <property type="match status" value="1"/>
</dbReference>
<dbReference type="Pfam" id="PF11734">
    <property type="entry name" value="TilS_C"/>
    <property type="match status" value="1"/>
</dbReference>
<dbReference type="SMART" id="SM00977">
    <property type="entry name" value="TilS_C"/>
    <property type="match status" value="1"/>
</dbReference>
<dbReference type="SUPFAM" id="SSF52402">
    <property type="entry name" value="Adenine nucleotide alpha hydrolases-like"/>
    <property type="match status" value="1"/>
</dbReference>
<dbReference type="SUPFAM" id="SSF82829">
    <property type="entry name" value="MesJ substrate recognition domain-like"/>
    <property type="match status" value="1"/>
</dbReference>
<dbReference type="SUPFAM" id="SSF56037">
    <property type="entry name" value="PheT/TilS domain"/>
    <property type="match status" value="1"/>
</dbReference>
<reference key="1">
    <citation type="journal article" date="2004" name="Nucleic Acids Res.">
        <title>The genome sequence of Bacillus cereus ATCC 10987 reveals metabolic adaptations and a large plasmid related to Bacillus anthracis pXO1.</title>
        <authorList>
            <person name="Rasko D.A."/>
            <person name="Ravel J."/>
            <person name="Oekstad O.A."/>
            <person name="Helgason E."/>
            <person name="Cer R.Z."/>
            <person name="Jiang L."/>
            <person name="Shores K.A."/>
            <person name="Fouts D.E."/>
            <person name="Tourasse N.J."/>
            <person name="Angiuoli S.V."/>
            <person name="Kolonay J.F."/>
            <person name="Nelson W.C."/>
            <person name="Kolstoe A.-B."/>
            <person name="Fraser C.M."/>
            <person name="Read T.D."/>
        </authorList>
    </citation>
    <scope>NUCLEOTIDE SEQUENCE [LARGE SCALE GENOMIC DNA]</scope>
    <source>
        <strain>ATCC 10987 / NRS 248</strain>
    </source>
</reference>
<protein>
    <recommendedName>
        <fullName evidence="1">tRNA(Ile)-lysidine synthase</fullName>
        <ecNumber evidence="1">6.3.4.19</ecNumber>
    </recommendedName>
    <alternativeName>
        <fullName evidence="1">tRNA(Ile)-2-lysyl-cytidine synthase</fullName>
    </alternativeName>
    <alternativeName>
        <fullName evidence="1">tRNA(Ile)-lysidine synthetase</fullName>
    </alternativeName>
</protein>